<sequence>MSEGRTDGDTWGPAQSVGATATMVAAARAVASQGPDALLDDPLAEPLVRAVGLDPFIRIVEGKLDFPDDPLFNRRARAEQITVRTRFFDDFFIDATEAGLRQAVILASGLDTRAYRLTWPAGTVVYEIDQPQVIAFKTDTLANLGAAPTAERRTISIDLRDDWPAALREGGFDVTRPTAWSAEGLLPYLPPEAQDRLFDNITALSAPGSRLATEHVPDPNAFSDERLARISERWQRLGLNLNAADLFYRGERNVVADYLTGKGWRVTPHPARQLYARNGFEFPEDEMRATFGEMSYVDATLTGGRG</sequence>
<protein>
    <recommendedName>
        <fullName>Putative S-adenosyl-L-methionine-dependent methyltransferase MAP_4190c</fullName>
        <ecNumber>2.1.1.-</ecNumber>
    </recommendedName>
</protein>
<name>Y4190_MYCPA</name>
<comment type="function">
    <text evidence="1">Exhibits S-adenosyl-L-methionine-dependent methyltransferase activity.</text>
</comment>
<comment type="similarity">
    <text evidence="2">Belongs to the UPF0677 family.</text>
</comment>
<proteinExistence type="inferred from homology"/>
<feature type="chain" id="PRO_0000361188" description="Putative S-adenosyl-L-methionine-dependent methyltransferase MAP_4190c">
    <location>
        <begin position="1"/>
        <end position="306"/>
    </location>
</feature>
<feature type="binding site" evidence="1">
    <location>
        <position position="129"/>
    </location>
    <ligand>
        <name>S-adenosyl-L-methionine</name>
        <dbReference type="ChEBI" id="CHEBI:59789"/>
    </ligand>
</feature>
<feature type="binding site" evidence="1">
    <location>
        <begin position="158"/>
        <end position="159"/>
    </location>
    <ligand>
        <name>S-adenosyl-L-methionine</name>
        <dbReference type="ChEBI" id="CHEBI:59789"/>
    </ligand>
</feature>
<gene>
    <name type="ordered locus">MAP_4190c</name>
</gene>
<evidence type="ECO:0000250" key="1"/>
<evidence type="ECO:0000305" key="2"/>
<organism>
    <name type="scientific">Mycolicibacterium paratuberculosis (strain ATCC BAA-968 / K-10)</name>
    <name type="common">Mycobacterium paratuberculosis</name>
    <dbReference type="NCBI Taxonomy" id="262316"/>
    <lineage>
        <taxon>Bacteria</taxon>
        <taxon>Bacillati</taxon>
        <taxon>Actinomycetota</taxon>
        <taxon>Actinomycetes</taxon>
        <taxon>Mycobacteriales</taxon>
        <taxon>Mycobacteriaceae</taxon>
        <taxon>Mycobacterium</taxon>
        <taxon>Mycobacterium avium complex (MAC)</taxon>
    </lineage>
</organism>
<reference key="1">
    <citation type="journal article" date="2005" name="Proc. Natl. Acad. Sci. U.S.A.">
        <title>The complete genome sequence of Mycobacterium avium subspecies paratuberculosis.</title>
        <authorList>
            <person name="Li L."/>
            <person name="Bannantine J.P."/>
            <person name="Zhang Q."/>
            <person name="Amonsin A."/>
            <person name="May B.J."/>
            <person name="Alt D."/>
            <person name="Banerji N."/>
            <person name="Kanjilal S."/>
            <person name="Kapur V."/>
        </authorList>
    </citation>
    <scope>NUCLEOTIDE SEQUENCE [LARGE SCALE GENOMIC DNA]</scope>
    <source>
        <strain>ATCC BAA-968 / K-10</strain>
    </source>
</reference>
<accession>Q73S86</accession>
<keyword id="KW-0489">Methyltransferase</keyword>
<keyword id="KW-1185">Reference proteome</keyword>
<keyword id="KW-0949">S-adenosyl-L-methionine</keyword>
<keyword id="KW-0808">Transferase</keyword>
<dbReference type="EC" id="2.1.1.-"/>
<dbReference type="EMBL" id="AE016958">
    <property type="protein sequence ID" value="AAS06740.1"/>
    <property type="molecule type" value="Genomic_DNA"/>
</dbReference>
<dbReference type="RefSeq" id="WP_003873488.1">
    <property type="nucleotide sequence ID" value="NZ_CP106873.1"/>
</dbReference>
<dbReference type="SMR" id="Q73S86"/>
<dbReference type="STRING" id="262316.MAP_4190c"/>
<dbReference type="KEGG" id="mpa:MAP_4190c"/>
<dbReference type="eggNOG" id="COG3315">
    <property type="taxonomic scope" value="Bacteria"/>
</dbReference>
<dbReference type="HOGENOM" id="CLU_056160_2_1_11"/>
<dbReference type="Proteomes" id="UP000000580">
    <property type="component" value="Chromosome"/>
</dbReference>
<dbReference type="GO" id="GO:0008168">
    <property type="term" value="F:methyltransferase activity"/>
    <property type="evidence" value="ECO:0007669"/>
    <property type="project" value="UniProtKB-KW"/>
</dbReference>
<dbReference type="GO" id="GO:0032259">
    <property type="term" value="P:methylation"/>
    <property type="evidence" value="ECO:0007669"/>
    <property type="project" value="UniProtKB-KW"/>
</dbReference>
<dbReference type="Gene3D" id="3.40.50.150">
    <property type="entry name" value="Vaccinia Virus protein VP39"/>
    <property type="match status" value="1"/>
</dbReference>
<dbReference type="InterPro" id="IPR007213">
    <property type="entry name" value="Ppm1/Ppm2/Tcmp"/>
</dbReference>
<dbReference type="InterPro" id="IPR029063">
    <property type="entry name" value="SAM-dependent_MTases_sf"/>
</dbReference>
<dbReference type="InterPro" id="IPR011610">
    <property type="entry name" value="SAM_mthyl_Trfase_ML2640-like"/>
</dbReference>
<dbReference type="NCBIfam" id="TIGR00027">
    <property type="entry name" value="mthyl_TIGR00027"/>
    <property type="match status" value="1"/>
</dbReference>
<dbReference type="PANTHER" id="PTHR43619">
    <property type="entry name" value="S-ADENOSYL-L-METHIONINE-DEPENDENT METHYLTRANSFERASE YKTD-RELATED"/>
    <property type="match status" value="1"/>
</dbReference>
<dbReference type="PANTHER" id="PTHR43619:SF2">
    <property type="entry name" value="S-ADENOSYL-L-METHIONINE-DEPENDENT METHYLTRANSFERASES SUPERFAMILY PROTEIN"/>
    <property type="match status" value="1"/>
</dbReference>
<dbReference type="Pfam" id="PF04072">
    <property type="entry name" value="LCM"/>
    <property type="match status" value="1"/>
</dbReference>
<dbReference type="SUPFAM" id="SSF53335">
    <property type="entry name" value="S-adenosyl-L-methionine-dependent methyltransferases"/>
    <property type="match status" value="1"/>
</dbReference>